<reference key="1">
    <citation type="journal article" date="2002" name="Genome Res.">
        <title>A complete sequence of the T. tengcongensis genome.</title>
        <authorList>
            <person name="Bao Q."/>
            <person name="Tian Y."/>
            <person name="Li W."/>
            <person name="Xu Z."/>
            <person name="Xuan Z."/>
            <person name="Hu S."/>
            <person name="Dong W."/>
            <person name="Yang J."/>
            <person name="Chen Y."/>
            <person name="Xue Y."/>
            <person name="Xu Y."/>
            <person name="Lai X."/>
            <person name="Huang L."/>
            <person name="Dong X."/>
            <person name="Ma Y."/>
            <person name="Ling L."/>
            <person name="Tan H."/>
            <person name="Chen R."/>
            <person name="Wang J."/>
            <person name="Yu J."/>
            <person name="Yang H."/>
        </authorList>
    </citation>
    <scope>NUCLEOTIDE SEQUENCE [LARGE SCALE GENOMIC DNA]</scope>
    <source>
        <strain>DSM 15242 / JCM 11007 / NBRC 100824 / MB4</strain>
    </source>
</reference>
<name>LEPA_CALS4</name>
<sequence length="603" mass="68166">MSERMKYIRNFCIIAHIDHGKSTLADRLIEKTGFLSEREMDKQILDNLELERERGITIKLKPVRMIYKAKDGNEYELNLIDTPGHVDFTYEVSRSIAACEGALLVVDASQGIEAQTLANVYLALEHDLEIIPVINKIDLPSADPERVKREIEDIIGIDASEALLTSAKEGIGIEEVLEAIVKRIPPPQGDEDKPLKALIFDSFYDNYKGAISFVRIVDGKVKRGMRIKMFSTGKVFEVTEVGSFRPDLYPVEELKAGEVGYIAANIKNVKDTRVGDTITDADNPADSPLPGYKEVVPMVFCGIYPADGEDYENLKEALEKLQLNDASLVFEPDTSAALGFGFRCGFLGLLHMEIVQERLEREYNLNLVTTAPSVIYKVYKTNGEVLELDNPTKMPPPTQIDHIEEPIVEATIMVPTDYVGPVMELCQERRGVYLGMEYIEKTRVLLKYEMPLNEIIYDFFDALKSRTRGYASLDYEFKGYKKSDLVKLDILVNGEVVDALSMIVHKDKAYEKGRKIVEKLKENIPRHLFEIPIQAAIGSRIIARETVKALRKNVLAKCYGGDVTRKKKLLEKQKEGKKRMRQIGTVEIPQEAFMSILKLDDQK</sequence>
<comment type="function">
    <text evidence="1">Required for accurate and efficient protein synthesis under certain stress conditions. May act as a fidelity factor of the translation reaction, by catalyzing a one-codon backward translocation of tRNAs on improperly translocated ribosomes. Back-translocation proceeds from a post-translocation (POST) complex to a pre-translocation (PRE) complex, thus giving elongation factor G a second chance to translocate the tRNAs correctly. Binds to ribosomes in a GTP-dependent manner.</text>
</comment>
<comment type="catalytic activity">
    <reaction evidence="1">
        <text>GTP + H2O = GDP + phosphate + H(+)</text>
        <dbReference type="Rhea" id="RHEA:19669"/>
        <dbReference type="ChEBI" id="CHEBI:15377"/>
        <dbReference type="ChEBI" id="CHEBI:15378"/>
        <dbReference type="ChEBI" id="CHEBI:37565"/>
        <dbReference type="ChEBI" id="CHEBI:43474"/>
        <dbReference type="ChEBI" id="CHEBI:58189"/>
        <dbReference type="EC" id="3.6.5.n1"/>
    </reaction>
</comment>
<comment type="subcellular location">
    <subcellularLocation>
        <location evidence="1">Cell membrane</location>
        <topology evidence="1">Peripheral membrane protein</topology>
        <orientation evidence="1">Cytoplasmic side</orientation>
    </subcellularLocation>
</comment>
<comment type="similarity">
    <text evidence="1">Belongs to the TRAFAC class translation factor GTPase superfamily. Classic translation factor GTPase family. LepA subfamily.</text>
</comment>
<organism>
    <name type="scientific">Caldanaerobacter subterraneus subsp. tengcongensis (strain DSM 15242 / JCM 11007 / NBRC 100824 / MB4)</name>
    <name type="common">Thermoanaerobacter tengcongensis</name>
    <dbReference type="NCBI Taxonomy" id="273068"/>
    <lineage>
        <taxon>Bacteria</taxon>
        <taxon>Bacillati</taxon>
        <taxon>Bacillota</taxon>
        <taxon>Clostridia</taxon>
        <taxon>Thermoanaerobacterales</taxon>
        <taxon>Thermoanaerobacteraceae</taxon>
        <taxon>Caldanaerobacter</taxon>
    </lineage>
</organism>
<evidence type="ECO:0000255" key="1">
    <source>
        <dbReference type="HAMAP-Rule" id="MF_00071"/>
    </source>
</evidence>
<dbReference type="EC" id="3.6.5.n1" evidence="1"/>
<dbReference type="EMBL" id="AE008691">
    <property type="protein sequence ID" value="AAM24207.1"/>
    <property type="molecule type" value="Genomic_DNA"/>
</dbReference>
<dbReference type="RefSeq" id="WP_011025326.1">
    <property type="nucleotide sequence ID" value="NC_003869.1"/>
</dbReference>
<dbReference type="SMR" id="Q8RB72"/>
<dbReference type="STRING" id="273068.TTE0951"/>
<dbReference type="KEGG" id="tte:TTE0951"/>
<dbReference type="eggNOG" id="COG0481">
    <property type="taxonomic scope" value="Bacteria"/>
</dbReference>
<dbReference type="HOGENOM" id="CLU_009995_3_3_9"/>
<dbReference type="OrthoDB" id="9801591at2"/>
<dbReference type="Proteomes" id="UP000000555">
    <property type="component" value="Chromosome"/>
</dbReference>
<dbReference type="GO" id="GO:0005886">
    <property type="term" value="C:plasma membrane"/>
    <property type="evidence" value="ECO:0007669"/>
    <property type="project" value="UniProtKB-SubCell"/>
</dbReference>
<dbReference type="GO" id="GO:0005525">
    <property type="term" value="F:GTP binding"/>
    <property type="evidence" value="ECO:0007669"/>
    <property type="project" value="UniProtKB-UniRule"/>
</dbReference>
<dbReference type="GO" id="GO:0003924">
    <property type="term" value="F:GTPase activity"/>
    <property type="evidence" value="ECO:0007669"/>
    <property type="project" value="UniProtKB-UniRule"/>
</dbReference>
<dbReference type="GO" id="GO:0043022">
    <property type="term" value="F:ribosome binding"/>
    <property type="evidence" value="ECO:0007669"/>
    <property type="project" value="UniProtKB-UniRule"/>
</dbReference>
<dbReference type="GO" id="GO:0003746">
    <property type="term" value="F:translation elongation factor activity"/>
    <property type="evidence" value="ECO:0007669"/>
    <property type="project" value="UniProtKB-UniRule"/>
</dbReference>
<dbReference type="GO" id="GO:0045727">
    <property type="term" value="P:positive regulation of translation"/>
    <property type="evidence" value="ECO:0007669"/>
    <property type="project" value="UniProtKB-UniRule"/>
</dbReference>
<dbReference type="CDD" id="cd03699">
    <property type="entry name" value="EF4_II"/>
    <property type="match status" value="1"/>
</dbReference>
<dbReference type="CDD" id="cd16260">
    <property type="entry name" value="EF4_III"/>
    <property type="match status" value="1"/>
</dbReference>
<dbReference type="CDD" id="cd01890">
    <property type="entry name" value="LepA"/>
    <property type="match status" value="1"/>
</dbReference>
<dbReference type="CDD" id="cd03709">
    <property type="entry name" value="lepA_C"/>
    <property type="match status" value="1"/>
</dbReference>
<dbReference type="FunFam" id="3.40.50.300:FF:000078">
    <property type="entry name" value="Elongation factor 4"/>
    <property type="match status" value="1"/>
</dbReference>
<dbReference type="FunFam" id="2.40.30.10:FF:000015">
    <property type="entry name" value="Translation factor GUF1, mitochondrial"/>
    <property type="match status" value="1"/>
</dbReference>
<dbReference type="FunFam" id="3.30.70.240:FF:000007">
    <property type="entry name" value="Translation factor GUF1, mitochondrial"/>
    <property type="match status" value="1"/>
</dbReference>
<dbReference type="FunFam" id="3.30.70.2570:FF:000001">
    <property type="entry name" value="Translation factor GUF1, mitochondrial"/>
    <property type="match status" value="1"/>
</dbReference>
<dbReference type="FunFam" id="3.30.70.870:FF:000004">
    <property type="entry name" value="Translation factor GUF1, mitochondrial"/>
    <property type="match status" value="1"/>
</dbReference>
<dbReference type="Gene3D" id="3.30.70.240">
    <property type="match status" value="1"/>
</dbReference>
<dbReference type="Gene3D" id="3.30.70.2570">
    <property type="entry name" value="Elongation factor 4, C-terminal domain"/>
    <property type="match status" value="1"/>
</dbReference>
<dbReference type="Gene3D" id="3.30.70.870">
    <property type="entry name" value="Elongation Factor G (Translational Gtpase), domain 3"/>
    <property type="match status" value="1"/>
</dbReference>
<dbReference type="Gene3D" id="3.40.50.300">
    <property type="entry name" value="P-loop containing nucleotide triphosphate hydrolases"/>
    <property type="match status" value="1"/>
</dbReference>
<dbReference type="Gene3D" id="2.40.30.10">
    <property type="entry name" value="Translation factors"/>
    <property type="match status" value="1"/>
</dbReference>
<dbReference type="HAMAP" id="MF_00071">
    <property type="entry name" value="LepA"/>
    <property type="match status" value="1"/>
</dbReference>
<dbReference type="InterPro" id="IPR006297">
    <property type="entry name" value="EF-4"/>
</dbReference>
<dbReference type="InterPro" id="IPR041095">
    <property type="entry name" value="EFG_II"/>
</dbReference>
<dbReference type="InterPro" id="IPR035647">
    <property type="entry name" value="EFG_III/V"/>
</dbReference>
<dbReference type="InterPro" id="IPR000640">
    <property type="entry name" value="EFG_V-like"/>
</dbReference>
<dbReference type="InterPro" id="IPR004161">
    <property type="entry name" value="EFTu-like_2"/>
</dbReference>
<dbReference type="InterPro" id="IPR031157">
    <property type="entry name" value="G_TR_CS"/>
</dbReference>
<dbReference type="InterPro" id="IPR038363">
    <property type="entry name" value="LepA_C_sf"/>
</dbReference>
<dbReference type="InterPro" id="IPR013842">
    <property type="entry name" value="LepA_CTD"/>
</dbReference>
<dbReference type="InterPro" id="IPR035654">
    <property type="entry name" value="LepA_IV"/>
</dbReference>
<dbReference type="InterPro" id="IPR027417">
    <property type="entry name" value="P-loop_NTPase"/>
</dbReference>
<dbReference type="InterPro" id="IPR005225">
    <property type="entry name" value="Small_GTP-bd"/>
</dbReference>
<dbReference type="InterPro" id="IPR000795">
    <property type="entry name" value="T_Tr_GTP-bd_dom"/>
</dbReference>
<dbReference type="InterPro" id="IPR009000">
    <property type="entry name" value="Transl_B-barrel_sf"/>
</dbReference>
<dbReference type="NCBIfam" id="TIGR01393">
    <property type="entry name" value="lepA"/>
    <property type="match status" value="1"/>
</dbReference>
<dbReference type="NCBIfam" id="TIGR00231">
    <property type="entry name" value="small_GTP"/>
    <property type="match status" value="1"/>
</dbReference>
<dbReference type="PANTHER" id="PTHR43512:SF4">
    <property type="entry name" value="TRANSLATION FACTOR GUF1 HOMOLOG, CHLOROPLASTIC"/>
    <property type="match status" value="1"/>
</dbReference>
<dbReference type="PANTHER" id="PTHR43512">
    <property type="entry name" value="TRANSLATION FACTOR GUF1-RELATED"/>
    <property type="match status" value="1"/>
</dbReference>
<dbReference type="Pfam" id="PF00679">
    <property type="entry name" value="EFG_C"/>
    <property type="match status" value="1"/>
</dbReference>
<dbReference type="Pfam" id="PF14492">
    <property type="entry name" value="EFG_III"/>
    <property type="match status" value="1"/>
</dbReference>
<dbReference type="Pfam" id="PF00009">
    <property type="entry name" value="GTP_EFTU"/>
    <property type="match status" value="1"/>
</dbReference>
<dbReference type="Pfam" id="PF03144">
    <property type="entry name" value="GTP_EFTU_D2"/>
    <property type="match status" value="1"/>
</dbReference>
<dbReference type="Pfam" id="PF06421">
    <property type="entry name" value="LepA_C"/>
    <property type="match status" value="1"/>
</dbReference>
<dbReference type="PRINTS" id="PR00315">
    <property type="entry name" value="ELONGATNFCT"/>
</dbReference>
<dbReference type="SMART" id="SM00838">
    <property type="entry name" value="EFG_C"/>
    <property type="match status" value="1"/>
</dbReference>
<dbReference type="SUPFAM" id="SSF54980">
    <property type="entry name" value="EF-G C-terminal domain-like"/>
    <property type="match status" value="2"/>
</dbReference>
<dbReference type="SUPFAM" id="SSF52540">
    <property type="entry name" value="P-loop containing nucleoside triphosphate hydrolases"/>
    <property type="match status" value="1"/>
</dbReference>
<dbReference type="SUPFAM" id="SSF50447">
    <property type="entry name" value="Translation proteins"/>
    <property type="match status" value="1"/>
</dbReference>
<dbReference type="PROSITE" id="PS00301">
    <property type="entry name" value="G_TR_1"/>
    <property type="match status" value="1"/>
</dbReference>
<dbReference type="PROSITE" id="PS51722">
    <property type="entry name" value="G_TR_2"/>
    <property type="match status" value="1"/>
</dbReference>
<keyword id="KW-1003">Cell membrane</keyword>
<keyword id="KW-0342">GTP-binding</keyword>
<keyword id="KW-0378">Hydrolase</keyword>
<keyword id="KW-0472">Membrane</keyword>
<keyword id="KW-0547">Nucleotide-binding</keyword>
<keyword id="KW-0648">Protein biosynthesis</keyword>
<keyword id="KW-1185">Reference proteome</keyword>
<gene>
    <name evidence="1" type="primary">lepA</name>
    <name type="ordered locus">TTE0951</name>
</gene>
<proteinExistence type="inferred from homology"/>
<feature type="chain" id="PRO_0000176364" description="Elongation factor 4">
    <location>
        <begin position="1"/>
        <end position="603"/>
    </location>
</feature>
<feature type="domain" description="tr-type G">
    <location>
        <begin position="6"/>
        <end position="188"/>
    </location>
</feature>
<feature type="binding site" evidence="1">
    <location>
        <begin position="18"/>
        <end position="23"/>
    </location>
    <ligand>
        <name>GTP</name>
        <dbReference type="ChEBI" id="CHEBI:37565"/>
    </ligand>
</feature>
<feature type="binding site" evidence="1">
    <location>
        <begin position="135"/>
        <end position="138"/>
    </location>
    <ligand>
        <name>GTP</name>
        <dbReference type="ChEBI" id="CHEBI:37565"/>
    </ligand>
</feature>
<accession>Q8RB72</accession>
<protein>
    <recommendedName>
        <fullName evidence="1">Elongation factor 4</fullName>
        <shortName evidence="1">EF-4</shortName>
        <ecNumber evidence="1">3.6.5.n1</ecNumber>
    </recommendedName>
    <alternativeName>
        <fullName evidence="1">Ribosomal back-translocase LepA</fullName>
    </alternativeName>
</protein>